<keyword id="KW-0002">3D-structure</keyword>
<keyword id="KW-1003">Cell membrane</keyword>
<keyword id="KW-0134">Cell wall</keyword>
<keyword id="KW-0325">Glycoprotein</keyword>
<keyword id="KW-0445">Lipid transport</keyword>
<keyword id="KW-0449">Lipoprotein</keyword>
<keyword id="KW-0472">Membrane</keyword>
<keyword id="KW-0564">Palmitate</keyword>
<keyword id="KW-1185">Reference proteome</keyword>
<keyword id="KW-0964">Secreted</keyword>
<keyword id="KW-0732">Signal</keyword>
<keyword id="KW-0813">Transport</keyword>
<keyword id="KW-0843">Virulence</keyword>
<gene>
    <name type="primary">lppX</name>
    <name type="ordered locus">Rv2945c</name>
    <name type="ORF">MTCY24G1.04</name>
</gene>
<name>LPPX_MYCTU</name>
<reference key="1">
    <citation type="journal article" date="1998" name="Nature">
        <title>Deciphering the biology of Mycobacterium tuberculosis from the complete genome sequence.</title>
        <authorList>
            <person name="Cole S.T."/>
            <person name="Brosch R."/>
            <person name="Parkhill J."/>
            <person name="Garnier T."/>
            <person name="Churcher C.M."/>
            <person name="Harris D.E."/>
            <person name="Gordon S.V."/>
            <person name="Eiglmeier K."/>
            <person name="Gas S."/>
            <person name="Barry C.E. III"/>
            <person name="Tekaia F."/>
            <person name="Badcock K."/>
            <person name="Basham D."/>
            <person name="Brown D."/>
            <person name="Chillingworth T."/>
            <person name="Connor R."/>
            <person name="Davies R.M."/>
            <person name="Devlin K."/>
            <person name="Feltwell T."/>
            <person name="Gentles S."/>
            <person name="Hamlin N."/>
            <person name="Holroyd S."/>
            <person name="Hornsby T."/>
            <person name="Jagels K."/>
            <person name="Krogh A."/>
            <person name="McLean J."/>
            <person name="Moule S."/>
            <person name="Murphy L.D."/>
            <person name="Oliver S."/>
            <person name="Osborne J."/>
            <person name="Quail M.A."/>
            <person name="Rajandream M.A."/>
            <person name="Rogers J."/>
            <person name="Rutter S."/>
            <person name="Seeger K."/>
            <person name="Skelton S."/>
            <person name="Squares S."/>
            <person name="Squares R."/>
            <person name="Sulston J.E."/>
            <person name="Taylor K."/>
            <person name="Whitehead S."/>
            <person name="Barrell B.G."/>
        </authorList>
    </citation>
    <scope>NUCLEOTIDE SEQUENCE [LARGE SCALE GENOMIC DNA]</scope>
    <source>
        <strain>ATCC 25618 / H37Rv</strain>
    </source>
</reference>
<reference key="2">
    <citation type="journal article" date="2000" name="Infect. Immun.">
        <title>Cloning of the gene encoding a 22-kilodalton cell surface antigen of Mycobacterium bovis BCG and analysis of its potential for DNA vaccination against tuberculosis.</title>
        <authorList>
            <person name="Lefevre P."/>
            <person name="Denis O."/>
            <person name="De Wit L."/>
            <person name="Tanghe A."/>
            <person name="Vandenbussche P."/>
            <person name="Content J."/>
            <person name="Huygen K."/>
        </authorList>
    </citation>
    <scope>SUBCELLULAR LOCATION</scope>
    <source>
        <strain>H37Rv</strain>
    </source>
</reference>
<reference key="3">
    <citation type="journal article" date="2009" name="J. Biol. Chem.">
        <title>Identification of apolipoprotein N-acyltransferase (Lnt) in mycobacteria.</title>
        <authorList>
            <person name="Tschumi A."/>
            <person name="Nai C."/>
            <person name="Auchli Y."/>
            <person name="Hunziker P."/>
            <person name="Gehrig P."/>
            <person name="Keller P."/>
            <person name="Grau T."/>
            <person name="Sander P."/>
        </authorList>
    </citation>
    <scope>DIACYLGLYCEROL AT CYS-27</scope>
    <scope>PALMITOYLATION AT CYS-27</scope>
    <scope>LIPIDATION</scope>
    <scope>SUBCELLULAR LOCATION</scope>
    <scope>EXPRESSION IN M.SMEGMATIS</scope>
</reference>
<reference key="4">
    <citation type="journal article" date="2011" name="Mol. Cell. Proteomics">
        <title>Proteogenomic analysis of Mycobacterium tuberculosis by high resolution mass spectrometry.</title>
        <authorList>
            <person name="Kelkar D.S."/>
            <person name="Kumar D."/>
            <person name="Kumar P."/>
            <person name="Balakrishnan L."/>
            <person name="Muthusamy B."/>
            <person name="Yadav A.K."/>
            <person name="Shrivastava P."/>
            <person name="Marimuthu A."/>
            <person name="Anand S."/>
            <person name="Sundaram H."/>
            <person name="Kingsbury R."/>
            <person name="Harsha H.C."/>
            <person name="Nair B."/>
            <person name="Prasad T.S."/>
            <person name="Chauhan D.S."/>
            <person name="Katoch K."/>
            <person name="Katoch V.M."/>
            <person name="Kumar P."/>
            <person name="Chaerkady R."/>
            <person name="Ramachandran S."/>
            <person name="Dash D."/>
            <person name="Pandey A."/>
        </authorList>
    </citation>
    <scope>IDENTIFICATION BY MASS SPECTROMETRY [LARGE SCALE ANALYSIS]</scope>
    <source>
        <strain>ATCC 25618 / H37Rv</strain>
    </source>
</reference>
<reference key="5">
    <citation type="journal article" date="2013" name="BMC Microbiol.">
        <title>Lipoproteins of slow-growing Mycobacteria carry three fatty acids and are N-acylated by apolipoprotein N-acyltransferase BCG_2070c.</title>
        <authorList>
            <person name="Bruelle J.K."/>
            <person name="Tschumi A."/>
            <person name="Sander P."/>
        </authorList>
    </citation>
    <scope>MASS SPECTROMETRY</scope>
    <scope>DIACYLGLYCEROL AT CYS-27</scope>
    <scope>PALMITOYLATION AT CYS-27</scope>
    <scope>LIPIDATION</scope>
    <scope>GLYCOSYLATION</scope>
    <scope>SUBCELLULAR LOCATION</scope>
    <scope>EXPRESSION IN M.BOVIS</scope>
    <source>
        <strain>H37Rv</strain>
    </source>
</reference>
<reference key="6">
    <citation type="journal article" date="2006" name="EMBO J.">
        <title>LppX is a lipoprotein required for the translocation of phthiocerol dimycocerosates to the surface of Mycobacterium tuberculosis.</title>
        <authorList>
            <person name="Sulzenbacher G."/>
            <person name="Canaan S."/>
            <person name="Bordat Y."/>
            <person name="Neyrolles O."/>
            <person name="Stadthagen G."/>
            <person name="Roig-Zamboni V."/>
            <person name="Rauzier J."/>
            <person name="Maurin D."/>
            <person name="Laval F."/>
            <person name="Daffe M."/>
            <person name="Cambillau C."/>
            <person name="Gicquel B."/>
            <person name="Bourne Y."/>
            <person name="Jackson M."/>
        </authorList>
    </citation>
    <scope>X-RAY CRYSTALLOGRAPHY (2.15 ANGSTROMS) OF 27-233</scope>
    <scope>POSSIBLE FUNCTION</scope>
    <scope>DOMAIN</scope>
    <scope>ACYLATION</scope>
    <scope>DISRUPTION PHENOTYPE</scope>
    <source>
        <strain>Mt103</strain>
    </source>
</reference>
<organism>
    <name type="scientific">Mycobacterium tuberculosis (strain ATCC 25618 / H37Rv)</name>
    <dbReference type="NCBI Taxonomy" id="83332"/>
    <lineage>
        <taxon>Bacteria</taxon>
        <taxon>Bacillati</taxon>
        <taxon>Actinomycetota</taxon>
        <taxon>Actinomycetes</taxon>
        <taxon>Mycobacteriales</taxon>
        <taxon>Mycobacteriaceae</taxon>
        <taxon>Mycobacterium</taxon>
        <taxon>Mycobacterium tuberculosis complex</taxon>
    </lineage>
</organism>
<protein>
    <recommendedName>
        <fullName evidence="5">Putative phthiocerol dimycocerosate transporter LppX</fullName>
    </recommendedName>
    <alternativeName>
        <fullName>Lipoprotein LppX</fullName>
    </alternativeName>
</protein>
<comment type="function">
    <text evidence="7">Might be involved in translocating phthiocerol dimycocerosates (PDIM) from the cell membrane to the outer membrane; PDIM forms part of the cell wall.</text>
</comment>
<comment type="subcellular location">
    <subcellularLocation>
        <location evidence="2">Cell surface</location>
    </subcellularLocation>
    <subcellularLocation>
        <location evidence="2">Secreted</location>
        <location evidence="2">Cell wall</location>
    </subcellularLocation>
    <subcellularLocation>
        <location evidence="2">Secreted</location>
    </subcellularLocation>
    <subcellularLocation>
        <location evidence="1 2">Cell membrane</location>
        <topology evidence="1 4 8">Lipid-anchor</topology>
    </subcellularLocation>
</comment>
<comment type="domain">
    <text evidence="7">Forms a U-shaped beta-half-barrel with a large hydrophobic cavity (2835 Angstroms(3)) which is large enough to hold a single phthiocerol dimycocerosate (PDIM) molecule.</text>
</comment>
<comment type="PTM">
    <text evidence="4 8">Modified by Lgt on Cys-27 with an S-linked diacylglycerol with a mixture of C16 and C19 fatty acids (palmitic and tuberculostearic acid), signal peptide is removed by LspA, modified by Lnt with an amide-linked mixture of C16 and C19 fatty acids, expressed in M.bovis and M.smegmatis (PubMed:19661058, PubMed:24093492). Hexose glycosylated in N-terminus between residues 27 and 55; there may be 2 sugar moieties in this region, expressed in M.bovis (PubMed:24093492).</text>
</comment>
<comment type="mass spectrometry" mass="26300.0" method="MALDI" evidence="4">
    <text>Expressed in M.bovis, lipidated and glycosylated.</text>
</comment>
<comment type="disruption phenotype">
    <text evidence="3">No growth phenotype when grown in culture, no release of phthiocerol dimycocerosates (PDIM) to the culture filtrate. Attenuated virulence, about 80-fold less recovery of bacteria from lungs of 3 week infected BALB/c mice.</text>
</comment>
<comment type="similarity">
    <text evidence="6">Belongs to the LppX/LprAFG lipoprotein family.</text>
</comment>
<evidence type="ECO:0000255" key="1">
    <source>
        <dbReference type="PROSITE-ProRule" id="PRU00303"/>
    </source>
</evidence>
<evidence type="ECO:0000269" key="2">
    <source>
    </source>
</evidence>
<evidence type="ECO:0000269" key="3">
    <source>
    </source>
</evidence>
<evidence type="ECO:0000269" key="4">
    <source>
    </source>
</evidence>
<evidence type="ECO:0000303" key="5">
    <source>
    </source>
</evidence>
<evidence type="ECO:0000305" key="6"/>
<evidence type="ECO:0000305" key="7">
    <source>
    </source>
</evidence>
<evidence type="ECO:0000305" key="8">
    <source>
    </source>
</evidence>
<evidence type="ECO:0000305" key="9">
    <source>
    </source>
</evidence>
<evidence type="ECO:0007829" key="10">
    <source>
        <dbReference type="PDB" id="2BYO"/>
    </source>
</evidence>
<accession>P9WK65</accession>
<accession>L0TCQ0</accession>
<accession>P65306</accession>
<accession>P96286</accession>
<sequence length="233" mass="24140">MNDGKRAVTSAVLVVLGACLALWLSGCSSPKPDAEEQGVPVSPTASDPALLAEIRQSLDATKGLTSVHVAVRTTGKVDSLLGITSADVDVRANPLAAKGVCTYNDEQGVPFRVQGDNISVKLFDDWSNLGSISELSTSRVLDPAAGVTQLLSGVTNLQAQGTEVIDGISTTKITGTIPASSVKMLDPGAKSARPATVWIAQDGSHHLVRASIDLGSGSIQLTQSKWNEPVNVD</sequence>
<feature type="signal peptide" evidence="1 9">
    <location>
        <begin position="1"/>
        <end position="26"/>
    </location>
</feature>
<feature type="chain" id="PRO_0000018121" description="Putative phthiocerol dimycocerosate transporter LppX">
    <location>
        <begin position="27"/>
        <end position="233"/>
    </location>
</feature>
<feature type="lipid moiety-binding region" description="N-palmitoyl cysteine" evidence="4 8">
    <location>
        <position position="27"/>
    </location>
</feature>
<feature type="lipid moiety-binding region" description="S-diacylglycerol cysteine" evidence="4 8">
    <location>
        <position position="27"/>
    </location>
</feature>
<feature type="helix" evidence="10">
    <location>
        <begin position="48"/>
        <end position="62"/>
    </location>
</feature>
<feature type="strand" evidence="10">
    <location>
        <begin position="65"/>
        <end position="75"/>
    </location>
</feature>
<feature type="strand" evidence="10">
    <location>
        <begin position="83"/>
        <end position="91"/>
    </location>
</feature>
<feature type="turn" evidence="10">
    <location>
        <begin position="92"/>
        <end position="95"/>
    </location>
</feature>
<feature type="strand" evidence="10">
    <location>
        <begin position="96"/>
        <end position="103"/>
    </location>
</feature>
<feature type="strand" evidence="10">
    <location>
        <begin position="106"/>
        <end position="114"/>
    </location>
</feature>
<feature type="strand" evidence="10">
    <location>
        <begin position="117"/>
        <end position="122"/>
    </location>
</feature>
<feature type="strand" evidence="10">
    <location>
        <begin position="125"/>
        <end position="131"/>
    </location>
</feature>
<feature type="helix" evidence="10">
    <location>
        <begin position="132"/>
        <end position="138"/>
    </location>
</feature>
<feature type="strand" evidence="10">
    <location>
        <begin position="155"/>
        <end position="165"/>
    </location>
</feature>
<feature type="strand" evidence="10">
    <location>
        <begin position="168"/>
        <end position="177"/>
    </location>
</feature>
<feature type="helix" evidence="10">
    <location>
        <begin position="179"/>
        <end position="185"/>
    </location>
</feature>
<feature type="strand" evidence="10">
    <location>
        <begin position="193"/>
        <end position="204"/>
    </location>
</feature>
<feature type="strand" evidence="10">
    <location>
        <begin position="207"/>
        <end position="213"/>
    </location>
</feature>
<feature type="strand" evidence="10">
    <location>
        <begin position="215"/>
        <end position="225"/>
    </location>
</feature>
<dbReference type="EMBL" id="AL123456">
    <property type="protein sequence ID" value="CCP45749.1"/>
    <property type="molecule type" value="Genomic_DNA"/>
</dbReference>
<dbReference type="PIR" id="F70668">
    <property type="entry name" value="F70668"/>
</dbReference>
<dbReference type="RefSeq" id="NP_217461.1">
    <property type="nucleotide sequence ID" value="NC_000962.3"/>
</dbReference>
<dbReference type="RefSeq" id="WP_003414872.1">
    <property type="nucleotide sequence ID" value="NZ_NVQJ01000015.1"/>
</dbReference>
<dbReference type="PDB" id="2BYO">
    <property type="method" value="X-ray"/>
    <property type="resolution" value="2.15 A"/>
    <property type="chains" value="A=27-233"/>
</dbReference>
<dbReference type="PDBsum" id="2BYO"/>
<dbReference type="SMR" id="P9WK65"/>
<dbReference type="STRING" id="83332.Rv2945c"/>
<dbReference type="PaxDb" id="83332-Rv2945c"/>
<dbReference type="DNASU" id="887956"/>
<dbReference type="GeneID" id="887956"/>
<dbReference type="KEGG" id="mtu:Rv2945c"/>
<dbReference type="KEGG" id="mtv:RVBD_2945c"/>
<dbReference type="TubercuList" id="Rv2945c"/>
<dbReference type="eggNOG" id="ENOG5032I98">
    <property type="taxonomic scope" value="Bacteria"/>
</dbReference>
<dbReference type="InParanoid" id="P9WK65"/>
<dbReference type="OrthoDB" id="4707201at2"/>
<dbReference type="PhylomeDB" id="P9WK65"/>
<dbReference type="EvolutionaryTrace" id="P9WK65"/>
<dbReference type="Proteomes" id="UP000001584">
    <property type="component" value="Chromosome"/>
</dbReference>
<dbReference type="GO" id="GO:0009986">
    <property type="term" value="C:cell surface"/>
    <property type="evidence" value="ECO:0007669"/>
    <property type="project" value="UniProtKB-SubCell"/>
</dbReference>
<dbReference type="GO" id="GO:0005576">
    <property type="term" value="C:extracellular region"/>
    <property type="evidence" value="ECO:0007005"/>
    <property type="project" value="MTBBASE"/>
</dbReference>
<dbReference type="GO" id="GO:0009274">
    <property type="term" value="C:peptidoglycan-based cell wall"/>
    <property type="evidence" value="ECO:0007005"/>
    <property type="project" value="UniProtKB"/>
</dbReference>
<dbReference type="GO" id="GO:0005886">
    <property type="term" value="C:plasma membrane"/>
    <property type="evidence" value="ECO:0007005"/>
    <property type="project" value="MTBBASE"/>
</dbReference>
<dbReference type="GO" id="GO:0005319">
    <property type="term" value="F:lipid transporter activity"/>
    <property type="evidence" value="ECO:0000314"/>
    <property type="project" value="MTBBASE"/>
</dbReference>
<dbReference type="GO" id="GO:0071770">
    <property type="term" value="P:DIM/DIP cell wall layer assembly"/>
    <property type="evidence" value="ECO:0000314"/>
    <property type="project" value="MTBBASE"/>
</dbReference>
<dbReference type="CDD" id="cd16334">
    <property type="entry name" value="LppX-like"/>
    <property type="match status" value="1"/>
</dbReference>
<dbReference type="Gene3D" id="2.50.20.20">
    <property type="match status" value="1"/>
</dbReference>
<dbReference type="InterPro" id="IPR029046">
    <property type="entry name" value="LolA/LolB/LppX"/>
</dbReference>
<dbReference type="InterPro" id="IPR009830">
    <property type="entry name" value="LppX/LprAFG"/>
</dbReference>
<dbReference type="Pfam" id="PF07161">
    <property type="entry name" value="LppX_LprAFG"/>
    <property type="match status" value="1"/>
</dbReference>
<dbReference type="SUPFAM" id="SSF89392">
    <property type="entry name" value="Prokaryotic lipoproteins and lipoprotein localization factors"/>
    <property type="match status" value="1"/>
</dbReference>
<dbReference type="PROSITE" id="PS51257">
    <property type="entry name" value="PROKAR_LIPOPROTEIN"/>
    <property type="match status" value="1"/>
</dbReference>
<proteinExistence type="evidence at protein level"/>